<evidence type="ECO:0000255" key="1">
    <source>
        <dbReference type="PROSITE-ProRule" id="PRU00190"/>
    </source>
</evidence>
<evidence type="ECO:0000305" key="2"/>
<evidence type="ECO:0000312" key="3">
    <source>
        <dbReference type="FlyBase" id="FBgn0053548"/>
    </source>
</evidence>
<sequence>MSTSTPVTEEPRSSSQMTISASTQELAELINIHLGDLRPEEPSWRVADSPISGRGIFATREIAAGEELFREHTLLVGPTAHRSMNLRTCTLCYRLIPGSTDSAALCPAGCGLPVCSECRDSTRHDLECKLFRKWKPLESQRIEPRALRILSVVRCFFLDEASRKLLYAMQANMDRYYMQEVQRAADCFEHFPREQDMLDYFYRTICAFNTNAFESRSNVDGHEVLVRALFPLAGLLNHQCTPNAAHHFENGETIVVCATERIPAGAEITMSYAKLLWSTLARKIFLGMTKHFICKCVRCQDPTENGTYLSALFCREQGCRGLVIPVQTRTLQPDWRCITCENVFPHAKMAKYQDFALNTINNRINSCSVQDMIHFINELCPRFCPSSNYVLIEAKLNVIWRMTRFDHEEYTPEEMGHMDRYREEVLAILHKLGAGECTLKKLITGEIQ</sequence>
<organism>
    <name type="scientific">Drosophila melanogaster</name>
    <name type="common">Fruit fly</name>
    <dbReference type="NCBI Taxonomy" id="7227"/>
    <lineage>
        <taxon>Eukaryota</taxon>
        <taxon>Metazoa</taxon>
        <taxon>Ecdysozoa</taxon>
        <taxon>Arthropoda</taxon>
        <taxon>Hexapoda</taxon>
        <taxon>Insecta</taxon>
        <taxon>Pterygota</taxon>
        <taxon>Neoptera</taxon>
        <taxon>Endopterygota</taxon>
        <taxon>Diptera</taxon>
        <taxon>Brachycera</taxon>
        <taxon>Muscomorpha</taxon>
        <taxon>Ephydroidea</taxon>
        <taxon>Drosophilidae</taxon>
        <taxon>Drosophila</taxon>
        <taxon>Sophophora</taxon>
    </lineage>
</organism>
<reference evidence="2" key="1">
    <citation type="journal article" date="2000" name="Science">
        <title>The genome sequence of Drosophila melanogaster.</title>
        <authorList>
            <person name="Adams M.D."/>
            <person name="Celniker S.E."/>
            <person name="Holt R.A."/>
            <person name="Evans C.A."/>
            <person name="Gocayne J.D."/>
            <person name="Amanatides P.G."/>
            <person name="Scherer S.E."/>
            <person name="Li P.W."/>
            <person name="Hoskins R.A."/>
            <person name="Galle R.F."/>
            <person name="George R.A."/>
            <person name="Lewis S.E."/>
            <person name="Richards S."/>
            <person name="Ashburner M."/>
            <person name="Henderson S.N."/>
            <person name="Sutton G.G."/>
            <person name="Wortman J.R."/>
            <person name="Yandell M.D."/>
            <person name="Zhang Q."/>
            <person name="Chen L.X."/>
            <person name="Brandon R.C."/>
            <person name="Rogers Y.-H.C."/>
            <person name="Blazej R.G."/>
            <person name="Champe M."/>
            <person name="Pfeiffer B.D."/>
            <person name="Wan K.H."/>
            <person name="Doyle C."/>
            <person name="Baxter E.G."/>
            <person name="Helt G."/>
            <person name="Nelson C.R."/>
            <person name="Miklos G.L.G."/>
            <person name="Abril J.F."/>
            <person name="Agbayani A."/>
            <person name="An H.-J."/>
            <person name="Andrews-Pfannkoch C."/>
            <person name="Baldwin D."/>
            <person name="Ballew R.M."/>
            <person name="Basu A."/>
            <person name="Baxendale J."/>
            <person name="Bayraktaroglu L."/>
            <person name="Beasley E.M."/>
            <person name="Beeson K.Y."/>
            <person name="Benos P.V."/>
            <person name="Berman B.P."/>
            <person name="Bhandari D."/>
            <person name="Bolshakov S."/>
            <person name="Borkova D."/>
            <person name="Botchan M.R."/>
            <person name="Bouck J."/>
            <person name="Brokstein P."/>
            <person name="Brottier P."/>
            <person name="Burtis K.C."/>
            <person name="Busam D.A."/>
            <person name="Butler H."/>
            <person name="Cadieu E."/>
            <person name="Center A."/>
            <person name="Chandra I."/>
            <person name="Cherry J.M."/>
            <person name="Cawley S."/>
            <person name="Dahlke C."/>
            <person name="Davenport L.B."/>
            <person name="Davies P."/>
            <person name="de Pablos B."/>
            <person name="Delcher A."/>
            <person name="Deng Z."/>
            <person name="Mays A.D."/>
            <person name="Dew I."/>
            <person name="Dietz S.M."/>
            <person name="Dodson K."/>
            <person name="Doup L.E."/>
            <person name="Downes M."/>
            <person name="Dugan-Rocha S."/>
            <person name="Dunkov B.C."/>
            <person name="Dunn P."/>
            <person name="Durbin K.J."/>
            <person name="Evangelista C.C."/>
            <person name="Ferraz C."/>
            <person name="Ferriera S."/>
            <person name="Fleischmann W."/>
            <person name="Fosler C."/>
            <person name="Gabrielian A.E."/>
            <person name="Garg N.S."/>
            <person name="Gelbart W.M."/>
            <person name="Glasser K."/>
            <person name="Glodek A."/>
            <person name="Gong F."/>
            <person name="Gorrell J.H."/>
            <person name="Gu Z."/>
            <person name="Guan P."/>
            <person name="Harris M."/>
            <person name="Harris N.L."/>
            <person name="Harvey D.A."/>
            <person name="Heiman T.J."/>
            <person name="Hernandez J.R."/>
            <person name="Houck J."/>
            <person name="Hostin D."/>
            <person name="Houston K.A."/>
            <person name="Howland T.J."/>
            <person name="Wei M.-H."/>
            <person name="Ibegwam C."/>
            <person name="Jalali M."/>
            <person name="Kalush F."/>
            <person name="Karpen G.H."/>
            <person name="Ke Z."/>
            <person name="Kennison J.A."/>
            <person name="Ketchum K.A."/>
            <person name="Kimmel B.E."/>
            <person name="Kodira C.D."/>
            <person name="Kraft C.L."/>
            <person name="Kravitz S."/>
            <person name="Kulp D."/>
            <person name="Lai Z."/>
            <person name="Lasko P."/>
            <person name="Lei Y."/>
            <person name="Levitsky A.A."/>
            <person name="Li J.H."/>
            <person name="Li Z."/>
            <person name="Liang Y."/>
            <person name="Lin X."/>
            <person name="Liu X."/>
            <person name="Mattei B."/>
            <person name="McIntosh T.C."/>
            <person name="McLeod M.P."/>
            <person name="McPherson D."/>
            <person name="Merkulov G."/>
            <person name="Milshina N.V."/>
            <person name="Mobarry C."/>
            <person name="Morris J."/>
            <person name="Moshrefi A."/>
            <person name="Mount S.M."/>
            <person name="Moy M."/>
            <person name="Murphy B."/>
            <person name="Murphy L."/>
            <person name="Muzny D.M."/>
            <person name="Nelson D.L."/>
            <person name="Nelson D.R."/>
            <person name="Nelson K.A."/>
            <person name="Nixon K."/>
            <person name="Nusskern D.R."/>
            <person name="Pacleb J.M."/>
            <person name="Palazzolo M."/>
            <person name="Pittman G.S."/>
            <person name="Pan S."/>
            <person name="Pollard J."/>
            <person name="Puri V."/>
            <person name="Reese M.G."/>
            <person name="Reinert K."/>
            <person name="Remington K."/>
            <person name="Saunders R.D.C."/>
            <person name="Scheeler F."/>
            <person name="Shen H."/>
            <person name="Shue B.C."/>
            <person name="Siden-Kiamos I."/>
            <person name="Simpson M."/>
            <person name="Skupski M.P."/>
            <person name="Smith T.J."/>
            <person name="Spier E."/>
            <person name="Spradling A.C."/>
            <person name="Stapleton M."/>
            <person name="Strong R."/>
            <person name="Sun E."/>
            <person name="Svirskas R."/>
            <person name="Tector C."/>
            <person name="Turner R."/>
            <person name="Venter E."/>
            <person name="Wang A.H."/>
            <person name="Wang X."/>
            <person name="Wang Z.-Y."/>
            <person name="Wassarman D.A."/>
            <person name="Weinstock G.M."/>
            <person name="Weissenbach J."/>
            <person name="Williams S.M."/>
            <person name="Woodage T."/>
            <person name="Worley K.C."/>
            <person name="Wu D."/>
            <person name="Yang S."/>
            <person name="Yao Q.A."/>
            <person name="Ye J."/>
            <person name="Yeh R.-F."/>
            <person name="Zaveri J.S."/>
            <person name="Zhan M."/>
            <person name="Zhang G."/>
            <person name="Zhao Q."/>
            <person name="Zheng L."/>
            <person name="Zheng X.H."/>
            <person name="Zhong F.N."/>
            <person name="Zhong W."/>
            <person name="Zhou X."/>
            <person name="Zhu S.C."/>
            <person name="Zhu X."/>
            <person name="Smith H.O."/>
            <person name="Gibbs R.A."/>
            <person name="Myers E.W."/>
            <person name="Rubin G.M."/>
            <person name="Venter J.C."/>
        </authorList>
    </citation>
    <scope>NUCLEOTIDE SEQUENCE [LARGE SCALE GENOMIC DNA]</scope>
    <source>
        <strain>Berkeley</strain>
    </source>
</reference>
<reference key="2">
    <citation type="journal article" date="2002" name="Genome Biol.">
        <title>Annotation of the Drosophila melanogaster euchromatic genome: a systematic review.</title>
        <authorList>
            <person name="Misra S."/>
            <person name="Crosby M.A."/>
            <person name="Mungall C.J."/>
            <person name="Matthews B.B."/>
            <person name="Campbell K.S."/>
            <person name="Hradecky P."/>
            <person name="Huang Y."/>
            <person name="Kaminker J.S."/>
            <person name="Millburn G.H."/>
            <person name="Prochnik S.E."/>
            <person name="Smith C.D."/>
            <person name="Tupy J.L."/>
            <person name="Whitfield E.J."/>
            <person name="Bayraktaroglu L."/>
            <person name="Berman B.P."/>
            <person name="Bettencourt B.R."/>
            <person name="Celniker S.E."/>
            <person name="de Grey A.D.N.J."/>
            <person name="Drysdale R.A."/>
            <person name="Harris N.L."/>
            <person name="Richter J."/>
            <person name="Russo S."/>
            <person name="Schroeder A.J."/>
            <person name="Shu S.Q."/>
            <person name="Stapleton M."/>
            <person name="Yamada C."/>
            <person name="Ashburner M."/>
            <person name="Gelbart W.M."/>
            <person name="Rubin G.M."/>
            <person name="Lewis S.E."/>
        </authorList>
    </citation>
    <scope>GENOME REANNOTATION</scope>
    <scope>ALTERNATIVE SPLICING</scope>
    <source>
        <strain>Berkeley</strain>
    </source>
</reference>
<gene>
    <name evidence="3" type="primary">SmydA-8</name>
    <name evidence="3" type="synonym">msta</name>
    <name evidence="3" type="ORF">CG33548</name>
</gene>
<dbReference type="EC" id="2.1.1.-" evidence="1"/>
<dbReference type="EMBL" id="AE014298">
    <property type="protein sequence ID" value="AAF45751.3"/>
    <property type="molecule type" value="Genomic_DNA"/>
</dbReference>
<dbReference type="RefSeq" id="NP_001014718.1">
    <molecule id="P83501-1"/>
    <property type="nucleotide sequence ID" value="NM_001014718.2"/>
</dbReference>
<dbReference type="SMR" id="P83501"/>
<dbReference type="BioGRID" id="57739">
    <property type="interactions" value="17"/>
</dbReference>
<dbReference type="DIP" id="DIP-22689N"/>
<dbReference type="DNASU" id="31200"/>
<dbReference type="EnsemblMetazoa" id="FBtr0070421">
    <molecule id="P83501-1"/>
    <property type="protein sequence ID" value="FBpp0070405"/>
    <property type="gene ID" value="FBgn0053548"/>
</dbReference>
<dbReference type="GeneID" id="31200"/>
<dbReference type="UCSC" id="CG33548-RA">
    <molecule id="P83501-1"/>
    <property type="organism name" value="d. melanogaster"/>
</dbReference>
<dbReference type="AGR" id="FB:FBgn0053548"/>
<dbReference type="CTD" id="31200"/>
<dbReference type="FlyBase" id="FBgn0053548">
    <property type="gene designation" value="SmydA-8"/>
</dbReference>
<dbReference type="VEuPathDB" id="VectorBase:FBgn0053548"/>
<dbReference type="GeneTree" id="ENSGT00940000167795"/>
<dbReference type="OrthoDB" id="5945798at2759"/>
<dbReference type="SignaLink" id="P83501"/>
<dbReference type="BioGRID-ORCS" id="31200">
    <property type="hits" value="0 hits in 1 CRISPR screen"/>
</dbReference>
<dbReference type="GenomeRNAi" id="31200"/>
<dbReference type="Proteomes" id="UP000000803">
    <property type="component" value="Chromosome X"/>
</dbReference>
<dbReference type="Bgee" id="FBgn0053548">
    <property type="expression patterns" value="Expressed in adult oenocyte (Drosophila) in adult thorax and 74 other cell types or tissues"/>
</dbReference>
<dbReference type="ExpressionAtlas" id="P83501">
    <property type="expression patterns" value="baseline and differential"/>
</dbReference>
<dbReference type="GO" id="GO:0000785">
    <property type="term" value="C:chromatin"/>
    <property type="evidence" value="ECO:0000250"/>
    <property type="project" value="FlyBase"/>
</dbReference>
<dbReference type="GO" id="GO:0005634">
    <property type="term" value="C:nucleus"/>
    <property type="evidence" value="ECO:0000318"/>
    <property type="project" value="GO_Central"/>
</dbReference>
<dbReference type="GO" id="GO:0042826">
    <property type="term" value="F:histone deacetylase binding"/>
    <property type="evidence" value="ECO:0000250"/>
    <property type="project" value="FlyBase"/>
</dbReference>
<dbReference type="GO" id="GO:0008170">
    <property type="term" value="F:N-methyltransferase activity"/>
    <property type="evidence" value="ECO:0007669"/>
    <property type="project" value="UniProtKB-ARBA"/>
</dbReference>
<dbReference type="GO" id="GO:0008276">
    <property type="term" value="F:protein methyltransferase activity"/>
    <property type="evidence" value="ECO:0007669"/>
    <property type="project" value="UniProtKB-ARBA"/>
</dbReference>
<dbReference type="GO" id="GO:0008757">
    <property type="term" value="F:S-adenosylmethionine-dependent methyltransferase activity"/>
    <property type="evidence" value="ECO:0000250"/>
    <property type="project" value="FlyBase"/>
</dbReference>
<dbReference type="GO" id="GO:0032259">
    <property type="term" value="P:methylation"/>
    <property type="evidence" value="ECO:0007669"/>
    <property type="project" value="UniProtKB-KW"/>
</dbReference>
<dbReference type="GO" id="GO:0010629">
    <property type="term" value="P:negative regulation of gene expression"/>
    <property type="evidence" value="ECO:0000250"/>
    <property type="project" value="FlyBase"/>
</dbReference>
<dbReference type="CDD" id="cd20071">
    <property type="entry name" value="SET_SMYD"/>
    <property type="match status" value="1"/>
</dbReference>
<dbReference type="FunFam" id="2.170.270.10:FF:000013">
    <property type="entry name" value="Histone-lysine N-methyltransferase SMYD1 isoform 1"/>
    <property type="match status" value="1"/>
</dbReference>
<dbReference type="Gene3D" id="1.10.220.160">
    <property type="match status" value="1"/>
</dbReference>
<dbReference type="Gene3D" id="6.10.140.2220">
    <property type="match status" value="1"/>
</dbReference>
<dbReference type="Gene3D" id="2.170.270.10">
    <property type="entry name" value="SET domain"/>
    <property type="match status" value="1"/>
</dbReference>
<dbReference type="InterPro" id="IPR001214">
    <property type="entry name" value="SET_dom"/>
</dbReference>
<dbReference type="InterPro" id="IPR046341">
    <property type="entry name" value="SET_dom_sf"/>
</dbReference>
<dbReference type="InterPro" id="IPR053010">
    <property type="entry name" value="SET_SmydA-8"/>
</dbReference>
<dbReference type="PANTHER" id="PTHR46455">
    <property type="entry name" value="SET AND MYND DOMAIN CONTAINING, ARTHROPOD-SPECIFIC, MEMBER 4, ISOFORM A"/>
    <property type="match status" value="1"/>
</dbReference>
<dbReference type="PANTHER" id="PTHR46455:SF3">
    <property type="entry name" value="SET AND MYND DOMAIN CONTAINING, ARTHROPOD-SPECIFIC, MEMBER 9, ISOFORM A-RELATED"/>
    <property type="match status" value="1"/>
</dbReference>
<dbReference type="Pfam" id="PF00856">
    <property type="entry name" value="SET"/>
    <property type="match status" value="1"/>
</dbReference>
<dbReference type="SMART" id="SM00317">
    <property type="entry name" value="SET"/>
    <property type="match status" value="1"/>
</dbReference>
<dbReference type="SUPFAM" id="SSF82199">
    <property type="entry name" value="SET domain"/>
    <property type="match status" value="1"/>
</dbReference>
<dbReference type="PROSITE" id="PS50280">
    <property type="entry name" value="SET"/>
    <property type="match status" value="1"/>
</dbReference>
<proteinExistence type="inferred from homology"/>
<name>MSTAB_DROME</name>
<keyword id="KW-0025">Alternative splicing</keyword>
<keyword id="KW-0489">Methyltransferase</keyword>
<keyword id="KW-1185">Reference proteome</keyword>
<keyword id="KW-0949">S-adenosyl-L-methionine</keyword>
<keyword id="KW-0808">Transferase</keyword>
<comment type="alternative products">
    <event type="alternative splicing"/>
    <isoform>
        <id>P83501-1</id>
        <name>B</name>
        <sequence type="displayed"/>
    </isoform>
    <isoform>
        <id>O46040-1</id>
        <name>A</name>
        <sequence type="external"/>
    </isoform>
</comment>
<comment type="similarity">
    <text evidence="1">Belongs to the class V-like SAM-binding methyltransferase superfamily.</text>
</comment>
<feature type="chain" id="PRO_0000096608" description="SET domain-containing protein SmydA-8, isoform B">
    <location>
        <begin position="1"/>
        <end position="448"/>
    </location>
</feature>
<feature type="domain" description="SET" evidence="1">
    <location>
        <begin position="42"/>
        <end position="273"/>
    </location>
</feature>
<accession>P83501</accession>
<protein>
    <recommendedName>
        <fullName evidence="2">SET domain-containing protein SmydA-8, isoform B</fullName>
        <ecNumber evidence="1">2.1.1.-</ecNumber>
    </recommendedName>
</protein>